<organism>
    <name type="scientific">Bacillus velezensis (strain DSM 23117 / BGSC 10A6 / LMG 26770 / FZB42)</name>
    <name type="common">Bacillus amyloliquefaciens subsp. plantarum</name>
    <dbReference type="NCBI Taxonomy" id="326423"/>
    <lineage>
        <taxon>Bacteria</taxon>
        <taxon>Bacillati</taxon>
        <taxon>Bacillota</taxon>
        <taxon>Bacilli</taxon>
        <taxon>Bacillales</taxon>
        <taxon>Bacillaceae</taxon>
        <taxon>Bacillus</taxon>
        <taxon>Bacillus amyloliquefaciens group</taxon>
    </lineage>
</organism>
<reference key="1">
    <citation type="journal article" date="2007" name="Nat. Biotechnol.">
        <title>Comparative analysis of the complete genome sequence of the plant growth-promoting bacterium Bacillus amyloliquefaciens FZB42.</title>
        <authorList>
            <person name="Chen X.H."/>
            <person name="Koumoutsi A."/>
            <person name="Scholz R."/>
            <person name="Eisenreich A."/>
            <person name="Schneider K."/>
            <person name="Heinemeyer I."/>
            <person name="Morgenstern B."/>
            <person name="Voss B."/>
            <person name="Hess W.R."/>
            <person name="Reva O."/>
            <person name="Junge H."/>
            <person name="Voigt B."/>
            <person name="Jungblut P.R."/>
            <person name="Vater J."/>
            <person name="Suessmuth R."/>
            <person name="Liesegang H."/>
            <person name="Strittmatter A."/>
            <person name="Gottschalk G."/>
            <person name="Borriss R."/>
        </authorList>
    </citation>
    <scope>NUCLEOTIDE SEQUENCE [LARGE SCALE GENOMIC DNA]</scope>
    <source>
        <strain>DSM 23117 / BGSC 10A6 / LMG 26770 / FZB42</strain>
    </source>
</reference>
<sequence length="145" mass="16405">MRTTPMANASTIERKWLVVDAAGKTLGRLSTEVASILRGKHKPTYTPHVDTGDHVIIINAEKIELTGKKLTDKIYYRHTQHPGGLKSRTALEMRTNYPEKMLELAIKGMLPKGSLGRQMFKKLNVYRGSEHPHEAQKPEVYELRG</sequence>
<comment type="function">
    <text evidence="1">This protein is one of the early assembly proteins of the 50S ribosomal subunit, although it is not seen to bind rRNA by itself. It is important during the early stages of 50S assembly.</text>
</comment>
<comment type="subunit">
    <text evidence="1">Part of the 50S ribosomal subunit.</text>
</comment>
<comment type="similarity">
    <text evidence="1">Belongs to the universal ribosomal protein uL13 family.</text>
</comment>
<evidence type="ECO:0000255" key="1">
    <source>
        <dbReference type="HAMAP-Rule" id="MF_01366"/>
    </source>
</evidence>
<evidence type="ECO:0000305" key="2"/>
<feature type="chain" id="PRO_1000055342" description="Large ribosomal subunit protein uL13">
    <location>
        <begin position="1"/>
        <end position="145"/>
    </location>
</feature>
<keyword id="KW-0687">Ribonucleoprotein</keyword>
<keyword id="KW-0689">Ribosomal protein</keyword>
<protein>
    <recommendedName>
        <fullName evidence="1">Large ribosomal subunit protein uL13</fullName>
    </recommendedName>
    <alternativeName>
        <fullName evidence="2">50S ribosomal protein L13</fullName>
    </alternativeName>
</protein>
<proteinExistence type="inferred from homology"/>
<name>RL13_BACVZ</name>
<gene>
    <name evidence="1" type="primary">rplM</name>
    <name type="ordered locus">RBAM_001740</name>
</gene>
<dbReference type="EMBL" id="CP000560">
    <property type="protein sequence ID" value="ABS72597.1"/>
    <property type="molecule type" value="Genomic_DNA"/>
</dbReference>
<dbReference type="RefSeq" id="WP_003225844.1">
    <property type="nucleotide sequence ID" value="NC_009725.2"/>
</dbReference>
<dbReference type="SMR" id="A7Z0S1"/>
<dbReference type="GeneID" id="93079313"/>
<dbReference type="KEGG" id="bay:RBAM_001740"/>
<dbReference type="HOGENOM" id="CLU_082184_2_2_9"/>
<dbReference type="Proteomes" id="UP000001120">
    <property type="component" value="Chromosome"/>
</dbReference>
<dbReference type="GO" id="GO:0022625">
    <property type="term" value="C:cytosolic large ribosomal subunit"/>
    <property type="evidence" value="ECO:0007669"/>
    <property type="project" value="TreeGrafter"/>
</dbReference>
<dbReference type="GO" id="GO:0003729">
    <property type="term" value="F:mRNA binding"/>
    <property type="evidence" value="ECO:0007669"/>
    <property type="project" value="TreeGrafter"/>
</dbReference>
<dbReference type="GO" id="GO:0003735">
    <property type="term" value="F:structural constituent of ribosome"/>
    <property type="evidence" value="ECO:0007669"/>
    <property type="project" value="InterPro"/>
</dbReference>
<dbReference type="GO" id="GO:0017148">
    <property type="term" value="P:negative regulation of translation"/>
    <property type="evidence" value="ECO:0007669"/>
    <property type="project" value="TreeGrafter"/>
</dbReference>
<dbReference type="GO" id="GO:0006412">
    <property type="term" value="P:translation"/>
    <property type="evidence" value="ECO:0007669"/>
    <property type="project" value="UniProtKB-UniRule"/>
</dbReference>
<dbReference type="CDD" id="cd00392">
    <property type="entry name" value="Ribosomal_L13"/>
    <property type="match status" value="1"/>
</dbReference>
<dbReference type="FunFam" id="3.90.1180.10:FF:000001">
    <property type="entry name" value="50S ribosomal protein L13"/>
    <property type="match status" value="1"/>
</dbReference>
<dbReference type="Gene3D" id="3.90.1180.10">
    <property type="entry name" value="Ribosomal protein L13"/>
    <property type="match status" value="1"/>
</dbReference>
<dbReference type="HAMAP" id="MF_01366">
    <property type="entry name" value="Ribosomal_uL13"/>
    <property type="match status" value="1"/>
</dbReference>
<dbReference type="InterPro" id="IPR005822">
    <property type="entry name" value="Ribosomal_uL13"/>
</dbReference>
<dbReference type="InterPro" id="IPR005823">
    <property type="entry name" value="Ribosomal_uL13_bac-type"/>
</dbReference>
<dbReference type="InterPro" id="IPR023563">
    <property type="entry name" value="Ribosomal_uL13_CS"/>
</dbReference>
<dbReference type="InterPro" id="IPR036899">
    <property type="entry name" value="Ribosomal_uL13_sf"/>
</dbReference>
<dbReference type="NCBIfam" id="TIGR01066">
    <property type="entry name" value="rplM_bact"/>
    <property type="match status" value="1"/>
</dbReference>
<dbReference type="PANTHER" id="PTHR11545:SF2">
    <property type="entry name" value="LARGE RIBOSOMAL SUBUNIT PROTEIN UL13M"/>
    <property type="match status" value="1"/>
</dbReference>
<dbReference type="PANTHER" id="PTHR11545">
    <property type="entry name" value="RIBOSOMAL PROTEIN L13"/>
    <property type="match status" value="1"/>
</dbReference>
<dbReference type="Pfam" id="PF00572">
    <property type="entry name" value="Ribosomal_L13"/>
    <property type="match status" value="1"/>
</dbReference>
<dbReference type="PIRSF" id="PIRSF002181">
    <property type="entry name" value="Ribosomal_L13"/>
    <property type="match status" value="1"/>
</dbReference>
<dbReference type="SUPFAM" id="SSF52161">
    <property type="entry name" value="Ribosomal protein L13"/>
    <property type="match status" value="1"/>
</dbReference>
<dbReference type="PROSITE" id="PS00783">
    <property type="entry name" value="RIBOSOMAL_L13"/>
    <property type="match status" value="1"/>
</dbReference>
<accession>A7Z0S1</accession>